<name>CYC2_RAT</name>
<comment type="function">
    <text>Electron carrier protein. The oxidized form of the cytochrome c heme group can accept an electron from the heme group of the cytochrome c1 subunit of cytochrome reductase. Cytochrome c then transfers this electron to the cytochrome oxidase complex, the final protein carrier in the mitochondrial electron-transport chain.</text>
</comment>
<comment type="function">
    <text evidence="1">Plays a role in apoptosis. Suppression of the anti-apoptotic members or activation of the pro-apoptotic members of the Bcl-2 family leads to altered mitochondrial membrane permeability resulting in release of cytochrome c into the cytosol. Binding of cytochrome c to Apaf-1 triggers the activation of caspase-9, which then accelerates apoptosis by activating other caspases (By similarity).</text>
</comment>
<comment type="subcellular location">
    <subcellularLocation>
        <location>Mitochondrion intermembrane space</location>
    </subcellularLocation>
    <text>Loosely associated with the inner membrane.</text>
</comment>
<comment type="tissue specificity">
    <text>This is one of two isocytochromes C found in the testis. The other is identical with the form found in other rat tissues. These cytochromes are assumed to be located in the sperm.</text>
</comment>
<comment type="PTM">
    <text>Binds 1 heme c group covalently per subunit.</text>
</comment>
<comment type="PTM">
    <text evidence="1">Phosphorylation at Tyr-49 and Tyr-98 both reduce by half the turnover in the reaction with cytochrome c oxidase, down-regulating mitochondrial respiration.</text>
</comment>
<comment type="similarity">
    <text evidence="3">Belongs to the cytochrome c family.</text>
</comment>
<comment type="online information" name="Protein Spotlight">
    <link uri="https://www.proteinspotlight.org/back_issues/076"/>
    <text>Life shuttle - Issue 76 of November 2006</text>
</comment>
<feature type="initiator methionine" description="Removed" evidence="2">
    <location>
        <position position="1"/>
    </location>
</feature>
<feature type="chain" id="PRO_0000108232" description="Cytochrome c, testis-specific">
    <location>
        <begin position="2"/>
        <end position="105"/>
    </location>
</feature>
<feature type="binding site" description="covalent">
    <location>
        <position position="15"/>
    </location>
    <ligand>
        <name>heme c</name>
        <dbReference type="ChEBI" id="CHEBI:61717"/>
    </ligand>
</feature>
<feature type="binding site" description="covalent">
    <location>
        <position position="18"/>
    </location>
    <ligand>
        <name>heme c</name>
        <dbReference type="ChEBI" id="CHEBI:61717"/>
    </ligand>
</feature>
<feature type="binding site" description="axial binding residue">
    <location>
        <position position="19"/>
    </location>
    <ligand>
        <name>heme c</name>
        <dbReference type="ChEBI" id="CHEBI:61717"/>
    </ligand>
    <ligandPart>
        <name>Fe</name>
        <dbReference type="ChEBI" id="CHEBI:18248"/>
    </ligandPart>
</feature>
<feature type="binding site" description="axial binding residue">
    <location>
        <position position="81"/>
    </location>
    <ligand>
        <name>heme c</name>
        <dbReference type="ChEBI" id="CHEBI:61717"/>
    </ligand>
    <ligandPart>
        <name>Fe</name>
        <dbReference type="ChEBI" id="CHEBI:18248"/>
    </ligandPart>
</feature>
<feature type="modified residue" description="N-acetylglycine" evidence="2">
    <location>
        <position position="2"/>
    </location>
</feature>
<protein>
    <recommendedName>
        <fullName>Cytochrome c, testis-specific</fullName>
    </recommendedName>
</protein>
<accession>P10715</accession>
<sequence>MGDAEAGKKIFIQKCAQCHTVEKGGKHKTGPNLWGLFGRKTGQAPGFSYTDANKNKGVIWTEETLMEYLENPKKYIPGTKMIFAGIKKKSEREDLIQYLKEATSS</sequence>
<reference key="1">
    <citation type="journal article" date="1988" name="J. Biol. Chem.">
        <title>Structure and expression of rodent genes encoding the testis-specific cytochrome c. Differences in gene structure and evolution between somatic and testicular variants.</title>
        <authorList>
            <person name="Virbasius J.V."/>
            <person name="Scarpulla R.C."/>
        </authorList>
    </citation>
    <scope>NUCLEOTIDE SEQUENCE [GENOMIC DNA / MRNA]</scope>
</reference>
<organism>
    <name type="scientific">Rattus norvegicus</name>
    <name type="common">Rat</name>
    <dbReference type="NCBI Taxonomy" id="10116"/>
    <lineage>
        <taxon>Eukaryota</taxon>
        <taxon>Metazoa</taxon>
        <taxon>Chordata</taxon>
        <taxon>Craniata</taxon>
        <taxon>Vertebrata</taxon>
        <taxon>Euteleostomi</taxon>
        <taxon>Mammalia</taxon>
        <taxon>Eutheria</taxon>
        <taxon>Euarchontoglires</taxon>
        <taxon>Glires</taxon>
        <taxon>Rodentia</taxon>
        <taxon>Myomorpha</taxon>
        <taxon>Muroidea</taxon>
        <taxon>Muridae</taxon>
        <taxon>Murinae</taxon>
        <taxon>Rattus</taxon>
    </lineage>
</organism>
<gene>
    <name type="primary">Cyct</name>
</gene>
<proteinExistence type="evidence at transcript level"/>
<keyword id="KW-0007">Acetylation</keyword>
<keyword id="KW-0053">Apoptosis</keyword>
<keyword id="KW-0249">Electron transport</keyword>
<keyword id="KW-0349">Heme</keyword>
<keyword id="KW-0408">Iron</keyword>
<keyword id="KW-0479">Metal-binding</keyword>
<keyword id="KW-0496">Mitochondrion</keyword>
<keyword id="KW-0597">Phosphoprotein</keyword>
<keyword id="KW-1185">Reference proteome</keyword>
<keyword id="KW-0679">Respiratory chain</keyword>
<keyword id="KW-0813">Transport</keyword>
<evidence type="ECO:0000250" key="1"/>
<evidence type="ECO:0000250" key="2">
    <source>
        <dbReference type="UniProtKB" id="P00015"/>
    </source>
</evidence>
<evidence type="ECO:0000305" key="3"/>
<dbReference type="EMBL" id="M20623">
    <property type="protein sequence ID" value="AAA41016.1"/>
    <property type="molecule type" value="mRNA"/>
</dbReference>
<dbReference type="EMBL" id="M20628">
    <property type="protein sequence ID" value="AAA41015.1"/>
    <property type="molecule type" value="Genomic_DNA"/>
</dbReference>
<dbReference type="EMBL" id="M20627">
    <property type="protein sequence ID" value="AAA41015.1"/>
    <property type="status" value="JOINED"/>
    <property type="molecule type" value="Genomic_DNA"/>
</dbReference>
<dbReference type="PIR" id="A28160">
    <property type="entry name" value="CCRTT"/>
</dbReference>
<dbReference type="RefSeq" id="NP_036972.1">
    <property type="nucleotide sequence ID" value="NM_012840.3"/>
</dbReference>
<dbReference type="SMR" id="P10715"/>
<dbReference type="FunCoup" id="P10715">
    <property type="interactions" value="551"/>
</dbReference>
<dbReference type="iPTMnet" id="P10715"/>
<dbReference type="PhosphoSitePlus" id="P10715"/>
<dbReference type="Ensembl" id="ENSRNOT00000008371.4">
    <property type="protein sequence ID" value="ENSRNOP00000008371.1"/>
    <property type="gene ID" value="ENSRNOG00000024457.7"/>
</dbReference>
<dbReference type="GeneID" id="25310"/>
<dbReference type="KEGG" id="rno:25310"/>
<dbReference type="UCSC" id="RGD:2452">
    <property type="organism name" value="rat"/>
</dbReference>
<dbReference type="AGR" id="RGD:2452"/>
<dbReference type="CTD" id="13067"/>
<dbReference type="RGD" id="2452">
    <property type="gene designation" value="Cyct"/>
</dbReference>
<dbReference type="GeneTree" id="ENSGT00940000162151"/>
<dbReference type="HOGENOM" id="CLU_060944_3_0_1"/>
<dbReference type="InParanoid" id="P10715"/>
<dbReference type="OrthoDB" id="449280at2759"/>
<dbReference type="PRO" id="PR:P10715"/>
<dbReference type="Proteomes" id="UP000002494">
    <property type="component" value="Chromosome 3"/>
</dbReference>
<dbReference type="Bgee" id="ENSRNOG00000024457">
    <property type="expression patterns" value="Expressed in testis and 8 other cell types or tissues"/>
</dbReference>
<dbReference type="ExpressionAtlas" id="P10715">
    <property type="expression patterns" value="baseline and differential"/>
</dbReference>
<dbReference type="GO" id="GO:0005758">
    <property type="term" value="C:mitochondrial intermembrane space"/>
    <property type="evidence" value="ECO:0000318"/>
    <property type="project" value="GO_Central"/>
</dbReference>
<dbReference type="GO" id="GO:0009055">
    <property type="term" value="F:electron transfer activity"/>
    <property type="evidence" value="ECO:0000318"/>
    <property type="project" value="GO_Central"/>
</dbReference>
<dbReference type="GO" id="GO:0020037">
    <property type="term" value="F:heme binding"/>
    <property type="evidence" value="ECO:0000266"/>
    <property type="project" value="RGD"/>
</dbReference>
<dbReference type="GO" id="GO:0046872">
    <property type="term" value="F:metal ion binding"/>
    <property type="evidence" value="ECO:0007669"/>
    <property type="project" value="UniProtKB-KW"/>
</dbReference>
<dbReference type="GO" id="GO:0006915">
    <property type="term" value="P:apoptotic process"/>
    <property type="evidence" value="ECO:0007669"/>
    <property type="project" value="UniProtKB-KW"/>
</dbReference>
<dbReference type="GO" id="GO:0042743">
    <property type="term" value="P:hydrogen peroxide metabolic process"/>
    <property type="evidence" value="ECO:0000266"/>
    <property type="project" value="RGD"/>
</dbReference>
<dbReference type="GO" id="GO:0006123">
    <property type="term" value="P:mitochondrial electron transport, cytochrome c to oxygen"/>
    <property type="evidence" value="ECO:0000318"/>
    <property type="project" value="GO_Central"/>
</dbReference>
<dbReference type="GO" id="GO:0006122">
    <property type="term" value="P:mitochondrial electron transport, ubiquinol to cytochrome c"/>
    <property type="evidence" value="ECO:0000318"/>
    <property type="project" value="GO_Central"/>
</dbReference>
<dbReference type="GO" id="GO:2001244">
    <property type="term" value="P:positive regulation of intrinsic apoptotic signaling pathway"/>
    <property type="evidence" value="ECO:0000266"/>
    <property type="project" value="RGD"/>
</dbReference>
<dbReference type="FunFam" id="1.10.760.10:FF:000008">
    <property type="entry name" value="Cytochrome c"/>
    <property type="match status" value="1"/>
</dbReference>
<dbReference type="Gene3D" id="1.10.760.10">
    <property type="entry name" value="Cytochrome c-like domain"/>
    <property type="match status" value="1"/>
</dbReference>
<dbReference type="InterPro" id="IPR009056">
    <property type="entry name" value="Cyt_c-like_dom"/>
</dbReference>
<dbReference type="InterPro" id="IPR036909">
    <property type="entry name" value="Cyt_c-like_dom_sf"/>
</dbReference>
<dbReference type="InterPro" id="IPR002327">
    <property type="entry name" value="Cyt_c_1A/1B"/>
</dbReference>
<dbReference type="PANTHER" id="PTHR11961">
    <property type="entry name" value="CYTOCHROME C"/>
    <property type="match status" value="1"/>
</dbReference>
<dbReference type="Pfam" id="PF00034">
    <property type="entry name" value="Cytochrom_C"/>
    <property type="match status" value="1"/>
</dbReference>
<dbReference type="PRINTS" id="PR00604">
    <property type="entry name" value="CYTCHRMECIAB"/>
</dbReference>
<dbReference type="SUPFAM" id="SSF46626">
    <property type="entry name" value="Cytochrome c"/>
    <property type="match status" value="1"/>
</dbReference>
<dbReference type="PROSITE" id="PS51007">
    <property type="entry name" value="CYTC"/>
    <property type="match status" value="1"/>
</dbReference>